<reference key="1">
    <citation type="journal article" date="1998" name="Science">
        <title>Genome sequence of the nematode C. elegans: a platform for investigating biology.</title>
        <authorList>
            <consortium name="The C. elegans sequencing consortium"/>
        </authorList>
    </citation>
    <scope>NUCLEOTIDE SEQUENCE [LARGE SCALE GENOMIC DNA]</scope>
    <source>
        <strain>Bristol N2</strain>
    </source>
</reference>
<sequence length="578" mass="65542">MDISDISASQLATSPPPITTIDFNSSIEESPAKRVKFAPELTKSFEETLSPTVTLVLRNNEETFDRCLLSFYSNYFRVLFSSKFRDSKSTTHRIRLISAPDLHLLLTIPKAFEQGIKPNISLQKAVELLEPSAFLQMSIPLDYITDVICANLTHENIIKIFRLALLYHTTLAVRVWRAMVRKFQTLFATNVYLTLKENELIGLLTDKHLNLKSADEKTVVVNWIKHNSPLQSDRMAQFAQRNFSRQPQPDATKYEVIRTRQPMDAIVCFGGWASRGVAQNIEVFNTRSDRWQTCNFNYDIPNIRRAYHGIEVVEDKLIVYGGFNGTQQFQTTVLFDLSTKEWRSGANMNDKRCYVTSARINDSHGRPLIFACGGMNGVSRLKTAEMYDYRADQWSEVANMAQMRSDGAVVTIDNKIVVIGGFDGRNIHQGGEVYDPVLDLWHPLSSNMRTRRTGCTAVSIMNQVCMIIGGFNGNRRLDSAEIYDMREGLWHPVPSLHTARSNFSACQMDTCSIYVAGGFDGQATTKESERLDLRSKMWQALPDMSEAKSALRMVTLSDHPFLDELFDIPDDTGIITTW</sequence>
<feature type="chain" id="PRO_0000119092" description="Kelch repeat-containing protein kel-10">
    <location>
        <begin position="1"/>
        <end position="578"/>
    </location>
</feature>
<feature type="domain" description="BTB" evidence="2">
    <location>
        <begin position="51"/>
        <end position="118"/>
    </location>
</feature>
<feature type="domain" description="BACK" evidence="1">
    <location>
        <begin position="158"/>
        <end position="236"/>
    </location>
</feature>
<feature type="repeat" description="Kelch 1" evidence="1">
    <location>
        <begin position="265"/>
        <end position="315"/>
    </location>
</feature>
<feature type="repeat" description="Kelch 2" evidence="1">
    <location>
        <begin position="316"/>
        <end position="362"/>
    </location>
</feature>
<feature type="repeat" description="Kelch 3" evidence="1">
    <location>
        <begin position="368"/>
        <end position="414"/>
    </location>
</feature>
<feature type="repeat" description="Kelch 4" evidence="1">
    <location>
        <begin position="416"/>
        <end position="462"/>
    </location>
</feature>
<feature type="repeat" description="Kelch 5" evidence="1">
    <location>
        <begin position="464"/>
        <end position="510"/>
    </location>
</feature>
<feature type="repeat" description="Kelch 6" evidence="1">
    <location>
        <begin position="512"/>
        <end position="558"/>
    </location>
</feature>
<protein>
    <recommendedName>
        <fullName>Kelch repeat-containing protein kel-10</fullName>
    </recommendedName>
</protein>
<dbReference type="EMBL" id="BX284603">
    <property type="protein sequence ID" value="CAA83141.4"/>
    <property type="molecule type" value="Genomic_DNA"/>
</dbReference>
<dbReference type="PIR" id="S42387">
    <property type="entry name" value="S42387"/>
</dbReference>
<dbReference type="RefSeq" id="NP_001366684.1">
    <property type="nucleotide sequence ID" value="NM_001379882.1"/>
</dbReference>
<dbReference type="RefSeq" id="NP_499241.3">
    <property type="nucleotide sequence ID" value="NM_066840.3"/>
</dbReference>
<dbReference type="SMR" id="P34569"/>
<dbReference type="FunCoup" id="P34569">
    <property type="interactions" value="650"/>
</dbReference>
<dbReference type="STRING" id="6239.T16H12.6.1"/>
<dbReference type="PaxDb" id="6239-T16H12.6"/>
<dbReference type="EnsemblMetazoa" id="T16H12.6.1">
    <property type="protein sequence ID" value="T16H12.6.1"/>
    <property type="gene ID" value="WBGene00002186"/>
</dbReference>
<dbReference type="GeneID" id="176423"/>
<dbReference type="UCSC" id="T16H12.6">
    <property type="organism name" value="c. elegans"/>
</dbReference>
<dbReference type="AGR" id="WB:WBGene00002186"/>
<dbReference type="WormBase" id="T16H12.6">
    <property type="protein sequence ID" value="CE54163"/>
    <property type="gene ID" value="WBGene00002186"/>
    <property type="gene designation" value="kel-10"/>
</dbReference>
<dbReference type="eggNOG" id="KOG4441">
    <property type="taxonomic scope" value="Eukaryota"/>
</dbReference>
<dbReference type="GeneTree" id="ENSGT00940000154664"/>
<dbReference type="HOGENOM" id="CLU_468724_0_0_1"/>
<dbReference type="InParanoid" id="P34569"/>
<dbReference type="OrthoDB" id="5803581at2759"/>
<dbReference type="PhylomeDB" id="P34569"/>
<dbReference type="PRO" id="PR:P34569"/>
<dbReference type="Proteomes" id="UP000001940">
    <property type="component" value="Chromosome III"/>
</dbReference>
<dbReference type="Bgee" id="WBGene00002186">
    <property type="expression patterns" value="Expressed in adult organism and 1 other cell type or tissue"/>
</dbReference>
<dbReference type="GO" id="GO:0031463">
    <property type="term" value="C:Cul3-RING ubiquitin ligase complex"/>
    <property type="evidence" value="ECO:0000318"/>
    <property type="project" value="GO_Central"/>
</dbReference>
<dbReference type="GO" id="GO:0005737">
    <property type="term" value="C:cytoplasm"/>
    <property type="evidence" value="ECO:0000318"/>
    <property type="project" value="GO_Central"/>
</dbReference>
<dbReference type="GO" id="GO:1990756">
    <property type="term" value="F:ubiquitin-like ligase-substrate adaptor activity"/>
    <property type="evidence" value="ECO:0000318"/>
    <property type="project" value="GO_Central"/>
</dbReference>
<dbReference type="GO" id="GO:0043161">
    <property type="term" value="P:proteasome-mediated ubiquitin-dependent protein catabolic process"/>
    <property type="evidence" value="ECO:0000318"/>
    <property type="project" value="GO_Central"/>
</dbReference>
<dbReference type="Gene3D" id="2.120.10.80">
    <property type="entry name" value="Kelch-type beta propeller"/>
    <property type="match status" value="2"/>
</dbReference>
<dbReference type="Gene3D" id="3.30.710.10">
    <property type="entry name" value="Potassium Channel Kv1.1, Chain A"/>
    <property type="match status" value="1"/>
</dbReference>
<dbReference type="InterPro" id="IPR011705">
    <property type="entry name" value="BACK"/>
</dbReference>
<dbReference type="InterPro" id="IPR017096">
    <property type="entry name" value="BTB-kelch_protein"/>
</dbReference>
<dbReference type="InterPro" id="IPR000210">
    <property type="entry name" value="BTB/POZ_dom"/>
</dbReference>
<dbReference type="InterPro" id="IPR015915">
    <property type="entry name" value="Kelch-typ_b-propeller"/>
</dbReference>
<dbReference type="InterPro" id="IPR006652">
    <property type="entry name" value="Kelch_1"/>
</dbReference>
<dbReference type="InterPro" id="IPR011333">
    <property type="entry name" value="SKP1/BTB/POZ_sf"/>
</dbReference>
<dbReference type="PANTHER" id="PTHR45632:SF3">
    <property type="entry name" value="KELCH-LIKE PROTEIN 32"/>
    <property type="match status" value="1"/>
</dbReference>
<dbReference type="PANTHER" id="PTHR45632">
    <property type="entry name" value="LD33804P"/>
    <property type="match status" value="1"/>
</dbReference>
<dbReference type="Pfam" id="PF07707">
    <property type="entry name" value="BACK"/>
    <property type="match status" value="1"/>
</dbReference>
<dbReference type="Pfam" id="PF00651">
    <property type="entry name" value="BTB"/>
    <property type="match status" value="1"/>
</dbReference>
<dbReference type="Pfam" id="PF01344">
    <property type="entry name" value="Kelch_1"/>
    <property type="match status" value="2"/>
</dbReference>
<dbReference type="Pfam" id="PF24681">
    <property type="entry name" value="Kelch_KLHDC2_KLHL20_DRC7"/>
    <property type="match status" value="1"/>
</dbReference>
<dbReference type="PIRSF" id="PIRSF037037">
    <property type="entry name" value="Kelch-like_protein_gigaxonin"/>
    <property type="match status" value="1"/>
</dbReference>
<dbReference type="PRINTS" id="PR00501">
    <property type="entry name" value="KELCHREPEAT"/>
</dbReference>
<dbReference type="SMART" id="SM00612">
    <property type="entry name" value="Kelch"/>
    <property type="match status" value="6"/>
</dbReference>
<dbReference type="SUPFAM" id="SSF117281">
    <property type="entry name" value="Kelch motif"/>
    <property type="match status" value="1"/>
</dbReference>
<dbReference type="SUPFAM" id="SSF54695">
    <property type="entry name" value="POZ domain"/>
    <property type="match status" value="1"/>
</dbReference>
<dbReference type="PROSITE" id="PS50097">
    <property type="entry name" value="BTB"/>
    <property type="match status" value="1"/>
</dbReference>
<gene>
    <name evidence="3" type="primary">kel-10</name>
    <name evidence="3" type="ORF">T16H12.6</name>
</gene>
<keyword id="KW-0880">Kelch repeat</keyword>
<keyword id="KW-1185">Reference proteome</keyword>
<keyword id="KW-0677">Repeat</keyword>
<name>KEL10_CAEEL</name>
<organism>
    <name type="scientific">Caenorhabditis elegans</name>
    <dbReference type="NCBI Taxonomy" id="6239"/>
    <lineage>
        <taxon>Eukaryota</taxon>
        <taxon>Metazoa</taxon>
        <taxon>Ecdysozoa</taxon>
        <taxon>Nematoda</taxon>
        <taxon>Chromadorea</taxon>
        <taxon>Rhabditida</taxon>
        <taxon>Rhabditina</taxon>
        <taxon>Rhabditomorpha</taxon>
        <taxon>Rhabditoidea</taxon>
        <taxon>Rhabditidae</taxon>
        <taxon>Peloderinae</taxon>
        <taxon>Caenorhabditis</taxon>
    </lineage>
</organism>
<accession>P34569</accession>
<accession>P34570</accession>
<evidence type="ECO:0000255" key="1"/>
<evidence type="ECO:0000255" key="2">
    <source>
        <dbReference type="PROSITE-ProRule" id="PRU00037"/>
    </source>
</evidence>
<evidence type="ECO:0000312" key="3">
    <source>
        <dbReference type="WormBase" id="T16H12.6"/>
    </source>
</evidence>
<proteinExistence type="predicted"/>